<gene>
    <name evidence="3" type="ordered locus">AtMg00200</name>
</gene>
<gene>
    <name evidence="2" type="ordered locus">At2g07724</name>
</gene>
<protein>
    <recommendedName>
        <fullName>Uncharacterized mitochondrial protein AtMg00200</fullName>
    </recommendedName>
    <alternativeName>
        <fullName>ORF107B</fullName>
    </alternativeName>
</protein>
<proteinExistence type="predicted"/>
<comment type="subcellular location">
    <subcellularLocation>
        <location evidence="1">Mitochondrion</location>
    </subcellularLocation>
</comment>
<comment type="miscellaneous">
    <text>A stretch of 270 kb of the mitochondrial genome is duplicated within the centromere of chromosome 2 resulting in the duplication of the gene. The expression of this duplicated gene (At2g07724) is demonstrated.</text>
</comment>
<sequence>MLNAFAFPQTNECFPAKRGFCANERTKCLNPKMPSKSMFGGSVSENLFLSKIRIGLSFPLPLSEIKLQNQDFRLEGQMSSFDPFVDESKALVRRLGQKVKAKSFLCR</sequence>
<reference key="1">
    <citation type="journal article" date="1997" name="Nat. Genet.">
        <title>The mitochondrial genome of Arabidopsis thaliana contains 57 genes in 366,924 nucleotides.</title>
        <authorList>
            <person name="Unseld M."/>
            <person name="Marienfeld J.R."/>
            <person name="Brandt P."/>
            <person name="Brennicke A."/>
        </authorList>
    </citation>
    <scope>NUCLEOTIDE SEQUENCE [LARGE SCALE GENOMIC DNA]</scope>
    <source>
        <strain>cv. C24</strain>
    </source>
</reference>
<reference key="2">
    <citation type="journal article" date="2018" name="Plant Cell">
        <title>Correction of persistent errors in Arabidopsis reference mitochondrial genomes.</title>
        <authorList>
            <person name="Sloan D.B."/>
            <person name="Wu Z."/>
            <person name="Sharbrough J."/>
        </authorList>
    </citation>
    <scope>NUCLEOTIDE SEQUENCE [LARGE SCALE GENOMIC DNA]</scope>
    <source>
        <strain>cv. Columbia</strain>
    </source>
</reference>
<reference key="3">
    <citation type="journal article" date="1999" name="Nature">
        <title>Sequence and analysis of chromosome 2 of the plant Arabidopsis thaliana.</title>
        <authorList>
            <person name="Lin X."/>
            <person name="Kaul S."/>
            <person name="Rounsley S.D."/>
            <person name="Shea T.P."/>
            <person name="Benito M.-I."/>
            <person name="Town C.D."/>
            <person name="Fujii C.Y."/>
            <person name="Mason T.M."/>
            <person name="Bowman C.L."/>
            <person name="Barnstead M.E."/>
            <person name="Feldblyum T.V."/>
            <person name="Buell C.R."/>
            <person name="Ketchum K.A."/>
            <person name="Lee J.J."/>
            <person name="Ronning C.M."/>
            <person name="Koo H.L."/>
            <person name="Moffat K.S."/>
            <person name="Cronin L.A."/>
            <person name="Shen M."/>
            <person name="Pai G."/>
            <person name="Van Aken S."/>
            <person name="Umayam L."/>
            <person name="Tallon L.J."/>
            <person name="Gill J.E."/>
            <person name="Adams M.D."/>
            <person name="Carrera A.J."/>
            <person name="Creasy T.H."/>
            <person name="Goodman H.M."/>
            <person name="Somerville C.R."/>
            <person name="Copenhaver G.P."/>
            <person name="Preuss D."/>
            <person name="Nierman W.C."/>
            <person name="White O."/>
            <person name="Eisen J.A."/>
            <person name="Salzberg S.L."/>
            <person name="Fraser C.M."/>
            <person name="Venter J.C."/>
        </authorList>
    </citation>
    <scope>NUCLEOTIDE SEQUENCE [LARGE SCALE GENOMIC DNA] (AT2G07724)</scope>
    <source>
        <strain>cv. Columbia</strain>
    </source>
</reference>
<reference key="4">
    <citation type="journal article" date="2017" name="Plant J.">
        <title>Araport11: a complete reannotation of the Arabidopsis thaliana reference genome.</title>
        <authorList>
            <person name="Cheng C.Y."/>
            <person name="Krishnakumar V."/>
            <person name="Chan A.P."/>
            <person name="Thibaud-Nissen F."/>
            <person name="Schobel S."/>
            <person name="Town C.D."/>
        </authorList>
    </citation>
    <scope>GENOME REANNOTATION</scope>
    <scope>SEQUENCE REVISION (AT2G07724)</scope>
    <source>
        <strain>cv. Columbia</strain>
    </source>
</reference>
<reference key="5">
    <citation type="journal article" date="2005" name="Plant Physiol.">
        <title>Analysis of the cDNAs of hypothetical genes on Arabidopsis chromosome 2 reveals numerous transcript variants.</title>
        <authorList>
            <person name="Xiao Y.-L."/>
            <person name="Smith S.R."/>
            <person name="Ishmael N."/>
            <person name="Redman J.C."/>
            <person name="Kumar N."/>
            <person name="Monaghan E.L."/>
            <person name="Ayele M."/>
            <person name="Haas B.J."/>
            <person name="Wu H.C."/>
            <person name="Town C.D."/>
        </authorList>
    </citation>
    <scope>NUCLEOTIDE SEQUENCE [LARGE SCALE MRNA] (AT2G07724)</scope>
    <source>
        <strain>cv. Columbia</strain>
    </source>
</reference>
<accession>P93287</accession>
<accession>Q27GL6</accession>
<accession>Q8S8I7</accession>
<keyword id="KW-0496">Mitochondrion</keyword>
<keyword id="KW-1185">Reference proteome</keyword>
<geneLocation type="mitochondrion"/>
<dbReference type="EMBL" id="Y08501">
    <property type="protein sequence ID" value="CAA69764.1"/>
    <property type="molecule type" value="Genomic_DNA"/>
</dbReference>
<dbReference type="EMBL" id="BK010421">
    <property type="status" value="NOT_ANNOTATED_CDS"/>
    <property type="molecule type" value="Genomic_DNA"/>
</dbReference>
<dbReference type="EMBL" id="AC006225">
    <property type="protein sequence ID" value="AAM15169.1"/>
    <property type="molecule type" value="Genomic_DNA"/>
</dbReference>
<dbReference type="EMBL" id="CP002685">
    <property type="protein sequence ID" value="AEC06106.1"/>
    <property type="molecule type" value="Genomic_DNA"/>
</dbReference>
<dbReference type="EMBL" id="AY144453">
    <property type="protein sequence ID" value="AAN52163.1"/>
    <property type="molecule type" value="mRNA"/>
</dbReference>
<dbReference type="RefSeq" id="NP_085490.1">
    <property type="nucleotide sequence ID" value="NC_001284.2"/>
</dbReference>
<dbReference type="RefSeq" id="NP_178802.1">
    <property type="nucleotide sequence ID" value="NM_126760.2"/>
</dbReference>
<dbReference type="PaxDb" id="3702-ATMG00200.1"/>
<dbReference type="EnsemblPlants" id="ATMG00200.1">
    <property type="protein sequence ID" value="ATMG00200.1"/>
    <property type="gene ID" value="ATMG00200"/>
</dbReference>
<dbReference type="GeneID" id="815397"/>
<dbReference type="Gramene" id="ATMG00200.1">
    <property type="protein sequence ID" value="ATMG00200.1"/>
    <property type="gene ID" value="ATMG00200"/>
</dbReference>
<dbReference type="KEGG" id="ath:AT2G07724"/>
<dbReference type="Araport" id="AT2G07724"/>
<dbReference type="Araport" id="ATMG00200"/>
<dbReference type="TAIR" id="AT2G07724"/>
<dbReference type="TAIR" id="ATMG00200">
    <property type="gene designation" value="ORF107B"/>
</dbReference>
<dbReference type="HOGENOM" id="CLU_2213567_0_0_1"/>
<dbReference type="InParanoid" id="P93287"/>
<dbReference type="PRO" id="PR:P93287"/>
<dbReference type="Proteomes" id="UP000006548">
    <property type="component" value="Chromosome 2"/>
</dbReference>
<dbReference type="Proteomes" id="UP000006548">
    <property type="component" value="Mitochondrion MT"/>
</dbReference>
<dbReference type="ExpressionAtlas" id="P93287">
    <property type="expression patterns" value="baseline and differential"/>
</dbReference>
<dbReference type="GO" id="GO:0005739">
    <property type="term" value="C:mitochondrion"/>
    <property type="evidence" value="ECO:0007669"/>
    <property type="project" value="UniProtKB-SubCell"/>
</dbReference>
<name>M200_ARATH</name>
<evidence type="ECO:0000305" key="1"/>
<evidence type="ECO:0000312" key="2">
    <source>
        <dbReference type="Araport" id="AT2G07724"/>
    </source>
</evidence>
<evidence type="ECO:0000312" key="3">
    <source>
        <dbReference type="Araport" id="ATMG00200"/>
    </source>
</evidence>
<feature type="chain" id="PRO_0000196760" description="Uncharacterized mitochondrial protein AtMg00200">
    <location>
        <begin position="1"/>
        <end position="107"/>
    </location>
</feature>
<feature type="sequence conflict" description="In Ref. 3; AAM15169 and 4; AEC06106." evidence="1" ref="3 4">
    <original>T</original>
    <variation>M</variation>
    <location>
        <position position="26"/>
    </location>
</feature>
<organism>
    <name type="scientific">Arabidopsis thaliana</name>
    <name type="common">Mouse-ear cress</name>
    <dbReference type="NCBI Taxonomy" id="3702"/>
    <lineage>
        <taxon>Eukaryota</taxon>
        <taxon>Viridiplantae</taxon>
        <taxon>Streptophyta</taxon>
        <taxon>Embryophyta</taxon>
        <taxon>Tracheophyta</taxon>
        <taxon>Spermatophyta</taxon>
        <taxon>Magnoliopsida</taxon>
        <taxon>eudicotyledons</taxon>
        <taxon>Gunneridae</taxon>
        <taxon>Pentapetalae</taxon>
        <taxon>rosids</taxon>
        <taxon>malvids</taxon>
        <taxon>Brassicales</taxon>
        <taxon>Brassicaceae</taxon>
        <taxon>Camelineae</taxon>
        <taxon>Arabidopsis</taxon>
    </lineage>
</organism>